<protein>
    <recommendedName>
        <fullName evidence="1">tRNA(Met) cytidine acetate ligase</fullName>
        <ecNumber evidence="1">6.3.4.-</ecNumber>
    </recommendedName>
</protein>
<accession>B1I7K5</accession>
<evidence type="ECO:0000255" key="1">
    <source>
        <dbReference type="HAMAP-Rule" id="MF_01539"/>
    </source>
</evidence>
<proteinExistence type="inferred from homology"/>
<comment type="function">
    <text evidence="1">Catalyzes the formation of N(4)-acetylcytidine (ac(4)C) at the wobble position of elongator tRNA(Met), using acetate and ATP as substrates. First activates an acetate ion to form acetyladenylate (Ac-AMP) and then transfers the acetyl group to tRNA to form ac(4)C34.</text>
</comment>
<comment type="catalytic activity">
    <reaction evidence="1">
        <text>cytidine(34) in elongator tRNA(Met) + acetate + ATP = N(4)-acetylcytidine(34) in elongator tRNA(Met) + AMP + diphosphate</text>
        <dbReference type="Rhea" id="RHEA:58144"/>
        <dbReference type="Rhea" id="RHEA-COMP:10693"/>
        <dbReference type="Rhea" id="RHEA-COMP:10694"/>
        <dbReference type="ChEBI" id="CHEBI:30089"/>
        <dbReference type="ChEBI" id="CHEBI:30616"/>
        <dbReference type="ChEBI" id="CHEBI:33019"/>
        <dbReference type="ChEBI" id="CHEBI:74900"/>
        <dbReference type="ChEBI" id="CHEBI:82748"/>
        <dbReference type="ChEBI" id="CHEBI:456215"/>
    </reaction>
</comment>
<comment type="subcellular location">
    <subcellularLocation>
        <location evidence="1">Cytoplasm</location>
    </subcellularLocation>
</comment>
<comment type="similarity">
    <text evidence="1">Belongs to the TmcAL family.</text>
</comment>
<reference key="1">
    <citation type="journal article" date="2010" name="Genome Biol.">
        <title>Structure and dynamics of the pan-genome of Streptococcus pneumoniae and closely related species.</title>
        <authorList>
            <person name="Donati C."/>
            <person name="Hiller N.L."/>
            <person name="Tettelin H."/>
            <person name="Muzzi A."/>
            <person name="Croucher N.J."/>
            <person name="Angiuoli S.V."/>
            <person name="Oggioni M."/>
            <person name="Dunning Hotopp J.C."/>
            <person name="Hu F.Z."/>
            <person name="Riley D.R."/>
            <person name="Covacci A."/>
            <person name="Mitchell T.J."/>
            <person name="Bentley S.D."/>
            <person name="Kilian M."/>
            <person name="Ehrlich G.D."/>
            <person name="Rappuoli R."/>
            <person name="Moxon E.R."/>
            <person name="Masignani V."/>
        </authorList>
    </citation>
    <scope>NUCLEOTIDE SEQUENCE [LARGE SCALE GENOMIC DNA]</scope>
    <source>
        <strain>Hungary19A-6</strain>
    </source>
</reference>
<keyword id="KW-0067">ATP-binding</keyword>
<keyword id="KW-0963">Cytoplasm</keyword>
<keyword id="KW-0436">Ligase</keyword>
<keyword id="KW-0547">Nucleotide-binding</keyword>
<keyword id="KW-0694">RNA-binding</keyword>
<keyword id="KW-0819">tRNA processing</keyword>
<keyword id="KW-0820">tRNA-binding</keyword>
<sequence length="365" mass="41205">MTITGIIAEFNPFHNGHKYLLDQAEGLKIVAMSGNFMQRGEPAIVDKWTRAQMALENGADLVVELPFLVSVQAADFFGQGAVDILDRLGIDSLVFGTEEVRDYQKIADLYTEKGAEMEKFVENLPDSLSYPQKTQAMWKEFAGLDFSGNTPNHVLALAYAKAVAGRNIKLHPIQRQGAGYHSVNKDVDFASATALRQHQKDQDFLERFMPSVALFEQASKVIWEDYFPLLRYQILSNPDLTTIYQVNQEMAVRIKEAIKTAQSVEELVELVTTKRYTKARVRRLLSYILVQARESNLPEAIHVLGFTEKGRQHLKSLKGQVSLVSRIGKEPWDAMTQKADQIYQLGKPSIAEQNFGRVPIRIETN</sequence>
<dbReference type="EC" id="6.3.4.-" evidence="1"/>
<dbReference type="EMBL" id="CP000936">
    <property type="protein sequence ID" value="ACA36694.1"/>
    <property type="molecule type" value="Genomic_DNA"/>
</dbReference>
<dbReference type="RefSeq" id="WP_000156335.1">
    <property type="nucleotide sequence ID" value="NC_010380.1"/>
</dbReference>
<dbReference type="SMR" id="B1I7K5"/>
<dbReference type="KEGG" id="spv:SPH_1851"/>
<dbReference type="HOGENOM" id="CLU_038915_0_2_9"/>
<dbReference type="Proteomes" id="UP000002163">
    <property type="component" value="Chromosome"/>
</dbReference>
<dbReference type="GO" id="GO:0005737">
    <property type="term" value="C:cytoplasm"/>
    <property type="evidence" value="ECO:0007669"/>
    <property type="project" value="UniProtKB-SubCell"/>
</dbReference>
<dbReference type="GO" id="GO:0005524">
    <property type="term" value="F:ATP binding"/>
    <property type="evidence" value="ECO:0007669"/>
    <property type="project" value="UniProtKB-KW"/>
</dbReference>
<dbReference type="GO" id="GO:0016879">
    <property type="term" value="F:ligase activity, forming carbon-nitrogen bonds"/>
    <property type="evidence" value="ECO:0007669"/>
    <property type="project" value="UniProtKB-UniRule"/>
</dbReference>
<dbReference type="GO" id="GO:0000049">
    <property type="term" value="F:tRNA binding"/>
    <property type="evidence" value="ECO:0007669"/>
    <property type="project" value="UniProtKB-KW"/>
</dbReference>
<dbReference type="GO" id="GO:0006400">
    <property type="term" value="P:tRNA modification"/>
    <property type="evidence" value="ECO:0007669"/>
    <property type="project" value="UniProtKB-UniRule"/>
</dbReference>
<dbReference type="Gene3D" id="3.40.50.620">
    <property type="entry name" value="HUPs"/>
    <property type="match status" value="1"/>
</dbReference>
<dbReference type="HAMAP" id="MF_01539">
    <property type="entry name" value="TmcAL"/>
    <property type="match status" value="1"/>
</dbReference>
<dbReference type="InterPro" id="IPR014729">
    <property type="entry name" value="Rossmann-like_a/b/a_fold"/>
</dbReference>
<dbReference type="InterPro" id="IPR008513">
    <property type="entry name" value="tRNA(Met)_cyd_acetate_ligase"/>
</dbReference>
<dbReference type="NCBIfam" id="NF010191">
    <property type="entry name" value="PRK13670.1"/>
    <property type="match status" value="1"/>
</dbReference>
<dbReference type="PANTHER" id="PTHR37825">
    <property type="entry name" value="TRNA(MET) CYTIDINE ACETATE LIGASE"/>
    <property type="match status" value="1"/>
</dbReference>
<dbReference type="PANTHER" id="PTHR37825:SF1">
    <property type="entry name" value="TRNA(MET) CYTIDINE ACETATE LIGASE"/>
    <property type="match status" value="1"/>
</dbReference>
<dbReference type="Pfam" id="PF05636">
    <property type="entry name" value="HIGH_NTase1"/>
    <property type="match status" value="1"/>
</dbReference>
<dbReference type="SUPFAM" id="SSF52374">
    <property type="entry name" value="Nucleotidylyl transferase"/>
    <property type="match status" value="1"/>
</dbReference>
<feature type="chain" id="PRO_1000146633" description="tRNA(Met) cytidine acetate ligase">
    <location>
        <begin position="1"/>
        <end position="365"/>
    </location>
</feature>
<feature type="binding site" evidence="1">
    <location>
        <begin position="7"/>
        <end position="20"/>
    </location>
    <ligand>
        <name>ATP</name>
        <dbReference type="ChEBI" id="CHEBI:30616"/>
    </ligand>
</feature>
<feature type="binding site" evidence="1">
    <location>
        <position position="96"/>
    </location>
    <ligand>
        <name>ATP</name>
        <dbReference type="ChEBI" id="CHEBI:30616"/>
    </ligand>
</feature>
<feature type="binding site" evidence="1">
    <location>
        <position position="152"/>
    </location>
    <ligand>
        <name>ATP</name>
        <dbReference type="ChEBI" id="CHEBI:30616"/>
    </ligand>
</feature>
<feature type="binding site" evidence="1">
    <location>
        <position position="175"/>
    </location>
    <ligand>
        <name>ATP</name>
        <dbReference type="ChEBI" id="CHEBI:30616"/>
    </ligand>
</feature>
<gene>
    <name evidence="1" type="primary">tmcAL</name>
    <name type="ordered locus">SPH_1851</name>
</gene>
<organism>
    <name type="scientific">Streptococcus pneumoniae (strain Hungary19A-6)</name>
    <dbReference type="NCBI Taxonomy" id="487214"/>
    <lineage>
        <taxon>Bacteria</taxon>
        <taxon>Bacillati</taxon>
        <taxon>Bacillota</taxon>
        <taxon>Bacilli</taxon>
        <taxon>Lactobacillales</taxon>
        <taxon>Streptococcaceae</taxon>
        <taxon>Streptococcus</taxon>
    </lineage>
</organism>
<name>TMCAL_STRPI</name>